<gene>
    <name type="primary">Nach</name>
</gene>
<sequence length="516" mass="59941">MGHEEELSPEQVDLKVSPLMGSLKRTWNDFCATSSIHGLRYTRDEDTNRIVHFVWLLISLVMFICAVVMARTFYIDFRSNPTRMNVESDNTPVNTLYFPPVTICPDVLFNMQKSEAFLQTLQLPQGTNQSVILRKLHIFYGFMLDDEKYSEQDTSLMESLLSLNNLTLQQLVEHLRWNCDEILYRCRFNGQIRDCLELFQLSKTFFGHCCSFNLRQTGLNFTAERAVGGLKYGLSVILRYKDDSYDPVQSYSFGVKLLIQESDAFPSAHSSSKFIAFNSEVFAAIRPQETFCSPAVKALSIEDRNCVFRNEFKMRYFKNYVYPNCELNCRVTNMVKFCNCHTYFFDFNRTTDRICTFKDIPCLVDNFANIISRKRSTQCYCPLTCEHLDYDVQISDFPLKLNMPVGDQFYSGINKNDGILHVFINSFGYRRLRHDLLSNMVTLVSNLGSAFSLFVGMSMLSVVEIMYYFSVILRKNYVLECEARKKMLHKGPKFAWPKANDSHSKHQKSVFIIHKM</sequence>
<organism>
    <name type="scientific">Drosophila ananassae</name>
    <name type="common">Fruit fly</name>
    <dbReference type="NCBI Taxonomy" id="7217"/>
    <lineage>
        <taxon>Eukaryota</taxon>
        <taxon>Metazoa</taxon>
        <taxon>Ecdysozoa</taxon>
        <taxon>Arthropoda</taxon>
        <taxon>Hexapoda</taxon>
        <taxon>Insecta</taxon>
        <taxon>Pterygota</taxon>
        <taxon>Neoptera</taxon>
        <taxon>Endopterygota</taxon>
        <taxon>Diptera</taxon>
        <taxon>Brachycera</taxon>
        <taxon>Muscomorpha</taxon>
        <taxon>Ephydroidea</taxon>
        <taxon>Drosophilidae</taxon>
        <taxon>Drosophila</taxon>
        <taxon>Sophophora</taxon>
    </lineage>
</organism>
<proteinExistence type="inferred from homology"/>
<protein>
    <recommendedName>
        <fullName>Sodium channel protein Nach</fullName>
    </recommendedName>
</protein>
<evidence type="ECO:0000250" key="1">
    <source>
        <dbReference type="UniProtKB" id="O61365"/>
    </source>
</evidence>
<evidence type="ECO:0000255" key="2"/>
<evidence type="ECO:0000305" key="3"/>
<keyword id="KW-0325">Glycoprotein</keyword>
<keyword id="KW-0407">Ion channel</keyword>
<keyword id="KW-0406">Ion transport</keyword>
<keyword id="KW-0472">Membrane</keyword>
<keyword id="KW-0915">Sodium</keyword>
<keyword id="KW-0894">Sodium channel</keyword>
<keyword id="KW-0739">Sodium transport</keyword>
<keyword id="KW-0812">Transmembrane</keyword>
<keyword id="KW-1133">Transmembrane helix</keyword>
<keyword id="KW-0813">Transport</keyword>
<name>NACH_DROAN</name>
<feature type="chain" id="PRO_0000181309" description="Sodium channel protein Nach">
    <location>
        <begin position="1"/>
        <end position="516"/>
    </location>
</feature>
<feature type="topological domain" description="Cytoplasmic" evidence="2">
    <location>
        <begin position="1"/>
        <end position="49"/>
    </location>
</feature>
<feature type="transmembrane region" description="Helical" evidence="2">
    <location>
        <begin position="50"/>
        <end position="70"/>
    </location>
</feature>
<feature type="topological domain" description="Extracellular" evidence="2">
    <location>
        <begin position="71"/>
        <end position="452"/>
    </location>
</feature>
<feature type="transmembrane region" description="Helical" evidence="2">
    <location>
        <begin position="453"/>
        <end position="473"/>
    </location>
</feature>
<feature type="topological domain" description="Cytoplasmic" evidence="2">
    <location>
        <begin position="474"/>
        <end position="516"/>
    </location>
</feature>
<feature type="glycosylation site" description="N-linked (GlcNAc...) asparagine" evidence="2">
    <location>
        <position position="128"/>
    </location>
</feature>
<feature type="glycosylation site" description="N-linked (GlcNAc...) asparagine" evidence="2">
    <location>
        <position position="165"/>
    </location>
</feature>
<feature type="glycosylation site" description="N-linked (GlcNAc...) asparagine" evidence="2">
    <location>
        <position position="220"/>
    </location>
</feature>
<feature type="glycosylation site" description="N-linked (GlcNAc...) asparagine" evidence="2">
    <location>
        <position position="348"/>
    </location>
</feature>
<accession>O61370</accession>
<dbReference type="EMBL" id="AF024691">
    <property type="protein sequence ID" value="AAC39089.1"/>
    <property type="molecule type" value="Genomic_DNA"/>
</dbReference>
<dbReference type="SMR" id="O61370"/>
<dbReference type="GlyCosmos" id="O61370">
    <property type="glycosylation" value="4 sites, No reported glycans"/>
</dbReference>
<dbReference type="eggNOG" id="KOG4294">
    <property type="taxonomic scope" value="Eukaryota"/>
</dbReference>
<dbReference type="OrthoDB" id="6502088at2759"/>
<dbReference type="GO" id="GO:0005886">
    <property type="term" value="C:plasma membrane"/>
    <property type="evidence" value="ECO:0007669"/>
    <property type="project" value="TreeGrafter"/>
</dbReference>
<dbReference type="GO" id="GO:0015280">
    <property type="term" value="F:ligand-gated sodium channel activity"/>
    <property type="evidence" value="ECO:0007669"/>
    <property type="project" value="TreeGrafter"/>
</dbReference>
<dbReference type="GO" id="GO:0035002">
    <property type="term" value="P:liquid clearance, open tracheal system"/>
    <property type="evidence" value="ECO:0000250"/>
    <property type="project" value="UniProtKB"/>
</dbReference>
<dbReference type="FunFam" id="2.60.470.10:FF:000016">
    <property type="entry name" value="Sodium channel protein Nach"/>
    <property type="match status" value="1"/>
</dbReference>
<dbReference type="Gene3D" id="2.60.470.10">
    <property type="entry name" value="Acid-sensing ion channels like domains"/>
    <property type="match status" value="1"/>
</dbReference>
<dbReference type="Gene3D" id="1.10.287.770">
    <property type="entry name" value="YojJ-like"/>
    <property type="match status" value="1"/>
</dbReference>
<dbReference type="InterPro" id="IPR001873">
    <property type="entry name" value="ENaC"/>
</dbReference>
<dbReference type="InterPro" id="IPR020903">
    <property type="entry name" value="ENaC_CS"/>
</dbReference>
<dbReference type="PANTHER" id="PTHR11690">
    <property type="entry name" value="AMILORIDE-SENSITIVE SODIUM CHANNEL-RELATED"/>
    <property type="match status" value="1"/>
</dbReference>
<dbReference type="PANTHER" id="PTHR11690:SF237">
    <property type="entry name" value="PICKPOCKET 16-RELATED"/>
    <property type="match status" value="1"/>
</dbReference>
<dbReference type="Pfam" id="PF00858">
    <property type="entry name" value="ASC"/>
    <property type="match status" value="1"/>
</dbReference>
<dbReference type="PRINTS" id="PR01078">
    <property type="entry name" value="AMINACHANNEL"/>
</dbReference>
<dbReference type="PROSITE" id="PS01206">
    <property type="entry name" value="ASC"/>
    <property type="match status" value="1"/>
</dbReference>
<comment type="function">
    <text evidence="1">Part of a complex that plays a role in tracheal liquid clearance. Probable role in sodium transport (By similarity).</text>
</comment>
<comment type="subcellular location">
    <subcellularLocation>
        <location>Membrane</location>
        <topology>Multi-pass membrane protein</topology>
    </subcellularLocation>
</comment>
<comment type="similarity">
    <text evidence="3">Belongs to the amiloride-sensitive sodium channel (TC 1.A.6) family.</text>
</comment>
<reference evidence="3" key="1">
    <citation type="submission" date="1997-09" db="EMBL/GenBank/DDBJ databases">
        <authorList>
            <person name="Da Lage J.-L."/>
            <person name="Alland C."/>
        </authorList>
    </citation>
    <scope>NUCLEOTIDE SEQUENCE [GENOMIC DNA]</scope>
    <source>
        <strain>Tai 13-1610</strain>
    </source>
</reference>